<feature type="chain" id="PRO_0000294742" description="Small ribosomal subunit protein uS11">
    <location>
        <begin position="1"/>
        <end position="134"/>
    </location>
</feature>
<feature type="region of interest" description="Disordered" evidence="2">
    <location>
        <begin position="1"/>
        <end position="24"/>
    </location>
</feature>
<reference key="1">
    <citation type="submission" date="2007-02" db="EMBL/GenBank/DDBJ databases">
        <title>Complete sequence of Clostridium thermocellum ATCC 27405.</title>
        <authorList>
            <consortium name="US DOE Joint Genome Institute"/>
            <person name="Copeland A."/>
            <person name="Lucas S."/>
            <person name="Lapidus A."/>
            <person name="Barry K."/>
            <person name="Detter J.C."/>
            <person name="Glavina del Rio T."/>
            <person name="Hammon N."/>
            <person name="Israni S."/>
            <person name="Dalin E."/>
            <person name="Tice H."/>
            <person name="Pitluck S."/>
            <person name="Chertkov O."/>
            <person name="Brettin T."/>
            <person name="Bruce D."/>
            <person name="Han C."/>
            <person name="Tapia R."/>
            <person name="Gilna P."/>
            <person name="Schmutz J."/>
            <person name="Larimer F."/>
            <person name="Land M."/>
            <person name="Hauser L."/>
            <person name="Kyrpides N."/>
            <person name="Mikhailova N."/>
            <person name="Wu J.H.D."/>
            <person name="Newcomb M."/>
            <person name="Richardson P."/>
        </authorList>
    </citation>
    <scope>NUCLEOTIDE SEQUENCE [LARGE SCALE GENOMIC DNA]</scope>
    <source>
        <strain>ATCC 27405 / DSM 1237 / JCM 9322 / NBRC 103400 / NCIMB 10682 / NRRL B-4536 / VPI 7372</strain>
    </source>
</reference>
<comment type="function">
    <text evidence="1">Located on the platform of the 30S subunit, it bridges several disparate RNA helices of the 16S rRNA. Forms part of the Shine-Dalgarno cleft in the 70S ribosome.</text>
</comment>
<comment type="subunit">
    <text evidence="1">Part of the 30S ribosomal subunit. Interacts with proteins S7 and S18. Binds to IF-3.</text>
</comment>
<comment type="similarity">
    <text evidence="1">Belongs to the universal ribosomal protein uS11 family.</text>
</comment>
<protein>
    <recommendedName>
        <fullName evidence="1">Small ribosomal subunit protein uS11</fullName>
    </recommendedName>
    <alternativeName>
        <fullName evidence="3">30S ribosomal protein S11</fullName>
    </alternativeName>
</protein>
<keyword id="KW-1185">Reference proteome</keyword>
<keyword id="KW-0687">Ribonucleoprotein</keyword>
<keyword id="KW-0689">Ribosomal protein</keyword>
<keyword id="KW-0694">RNA-binding</keyword>
<keyword id="KW-0699">rRNA-binding</keyword>
<name>RS11_ACET2</name>
<organism>
    <name type="scientific">Acetivibrio thermocellus (strain ATCC 27405 / DSM 1237 / JCM 9322 / NBRC 103400 / NCIMB 10682 / NRRL B-4536 / VPI 7372)</name>
    <name type="common">Clostridium thermocellum</name>
    <dbReference type="NCBI Taxonomy" id="203119"/>
    <lineage>
        <taxon>Bacteria</taxon>
        <taxon>Bacillati</taxon>
        <taxon>Bacillota</taxon>
        <taxon>Clostridia</taxon>
        <taxon>Eubacteriales</taxon>
        <taxon>Oscillospiraceae</taxon>
        <taxon>Acetivibrio</taxon>
    </lineage>
</organism>
<dbReference type="EMBL" id="CP000568">
    <property type="protein sequence ID" value="ABN54128.1"/>
    <property type="molecule type" value="Genomic_DNA"/>
</dbReference>
<dbReference type="RefSeq" id="WP_003514675.1">
    <property type="nucleotide sequence ID" value="NC_009012.1"/>
</dbReference>
<dbReference type="SMR" id="A3DJJ9"/>
<dbReference type="STRING" id="203119.Cthe_2930"/>
<dbReference type="GeneID" id="35806196"/>
<dbReference type="KEGG" id="cth:Cthe_2930"/>
<dbReference type="eggNOG" id="COG0100">
    <property type="taxonomic scope" value="Bacteria"/>
</dbReference>
<dbReference type="HOGENOM" id="CLU_072439_5_0_9"/>
<dbReference type="OrthoDB" id="9806415at2"/>
<dbReference type="Proteomes" id="UP000002145">
    <property type="component" value="Chromosome"/>
</dbReference>
<dbReference type="GO" id="GO:1990904">
    <property type="term" value="C:ribonucleoprotein complex"/>
    <property type="evidence" value="ECO:0007669"/>
    <property type="project" value="UniProtKB-KW"/>
</dbReference>
<dbReference type="GO" id="GO:0005840">
    <property type="term" value="C:ribosome"/>
    <property type="evidence" value="ECO:0007669"/>
    <property type="project" value="UniProtKB-KW"/>
</dbReference>
<dbReference type="GO" id="GO:0019843">
    <property type="term" value="F:rRNA binding"/>
    <property type="evidence" value="ECO:0007669"/>
    <property type="project" value="UniProtKB-UniRule"/>
</dbReference>
<dbReference type="GO" id="GO:0003735">
    <property type="term" value="F:structural constituent of ribosome"/>
    <property type="evidence" value="ECO:0007669"/>
    <property type="project" value="InterPro"/>
</dbReference>
<dbReference type="GO" id="GO:0006412">
    <property type="term" value="P:translation"/>
    <property type="evidence" value="ECO:0007669"/>
    <property type="project" value="UniProtKB-UniRule"/>
</dbReference>
<dbReference type="FunFam" id="3.30.420.80:FF:000001">
    <property type="entry name" value="30S ribosomal protein S11"/>
    <property type="match status" value="1"/>
</dbReference>
<dbReference type="Gene3D" id="3.30.420.80">
    <property type="entry name" value="Ribosomal protein S11"/>
    <property type="match status" value="1"/>
</dbReference>
<dbReference type="HAMAP" id="MF_01310">
    <property type="entry name" value="Ribosomal_uS11"/>
    <property type="match status" value="1"/>
</dbReference>
<dbReference type="InterPro" id="IPR001971">
    <property type="entry name" value="Ribosomal_uS11"/>
</dbReference>
<dbReference type="InterPro" id="IPR019981">
    <property type="entry name" value="Ribosomal_uS11_bac-type"/>
</dbReference>
<dbReference type="InterPro" id="IPR018102">
    <property type="entry name" value="Ribosomal_uS11_CS"/>
</dbReference>
<dbReference type="InterPro" id="IPR036967">
    <property type="entry name" value="Ribosomal_uS11_sf"/>
</dbReference>
<dbReference type="NCBIfam" id="NF003698">
    <property type="entry name" value="PRK05309.1"/>
    <property type="match status" value="1"/>
</dbReference>
<dbReference type="NCBIfam" id="TIGR03632">
    <property type="entry name" value="uS11_bact"/>
    <property type="match status" value="1"/>
</dbReference>
<dbReference type="PANTHER" id="PTHR11759">
    <property type="entry name" value="40S RIBOSOMAL PROTEIN S14/30S RIBOSOMAL PROTEIN S11"/>
    <property type="match status" value="1"/>
</dbReference>
<dbReference type="Pfam" id="PF00411">
    <property type="entry name" value="Ribosomal_S11"/>
    <property type="match status" value="1"/>
</dbReference>
<dbReference type="PIRSF" id="PIRSF002131">
    <property type="entry name" value="Ribosomal_S11"/>
    <property type="match status" value="1"/>
</dbReference>
<dbReference type="SUPFAM" id="SSF53137">
    <property type="entry name" value="Translational machinery components"/>
    <property type="match status" value="1"/>
</dbReference>
<dbReference type="PROSITE" id="PS00054">
    <property type="entry name" value="RIBOSOMAL_S11"/>
    <property type="match status" value="1"/>
</dbReference>
<sequence>MATKMAGVKRAGRKRKERKNIERGAAHIRSTFNNTIVTITDVEGNTISWSSAGTLGFRGSRKSTPFAAQMAAEAAAKAAMEHGLKTVEVYVKGPGSGREAAIRALQAAGLEVSLIKDVTPIPHNGCRPPKRRRV</sequence>
<accession>A3DJJ9</accession>
<evidence type="ECO:0000255" key="1">
    <source>
        <dbReference type="HAMAP-Rule" id="MF_01310"/>
    </source>
</evidence>
<evidence type="ECO:0000256" key="2">
    <source>
        <dbReference type="SAM" id="MobiDB-lite"/>
    </source>
</evidence>
<evidence type="ECO:0000305" key="3"/>
<proteinExistence type="inferred from homology"/>
<gene>
    <name evidence="1" type="primary">rpsK</name>
    <name type="ordered locus">Cthe_2930</name>
</gene>